<keyword id="KW-1003">Cell membrane</keyword>
<keyword id="KW-0472">Membrane</keyword>
<keyword id="KW-1185">Reference proteome</keyword>
<keyword id="KW-0808">Transferase</keyword>
<keyword id="KW-0812">Transmembrane</keyword>
<keyword id="KW-1133">Transmembrane helix</keyword>
<accession>Q182Z4</accession>
<feature type="chain" id="PRO_1000053418" description="Phosphatidylglycerol--prolipoprotein diacylglyceryl transferase">
    <location>
        <begin position="1"/>
        <end position="248"/>
    </location>
</feature>
<feature type="transmembrane region" description="Helical" evidence="1">
    <location>
        <begin position="6"/>
        <end position="26"/>
    </location>
</feature>
<feature type="transmembrane region" description="Helical" evidence="1">
    <location>
        <begin position="47"/>
        <end position="67"/>
    </location>
</feature>
<feature type="transmembrane region" description="Helical" evidence="1">
    <location>
        <begin position="84"/>
        <end position="104"/>
    </location>
</feature>
<feature type="transmembrane region" description="Helical" evidence="1">
    <location>
        <begin position="186"/>
        <end position="206"/>
    </location>
</feature>
<feature type="transmembrane region" description="Helical" evidence="1">
    <location>
        <begin position="218"/>
        <end position="238"/>
    </location>
</feature>
<feature type="binding site" evidence="1">
    <location>
        <position position="130"/>
    </location>
    <ligand>
        <name>a 1,2-diacyl-sn-glycero-3-phospho-(1'-sn-glycerol)</name>
        <dbReference type="ChEBI" id="CHEBI:64716"/>
    </ligand>
</feature>
<reference key="1">
    <citation type="journal article" date="2006" name="Nat. Genet.">
        <title>The multidrug-resistant human pathogen Clostridium difficile has a highly mobile, mosaic genome.</title>
        <authorList>
            <person name="Sebaihia M."/>
            <person name="Wren B.W."/>
            <person name="Mullany P."/>
            <person name="Fairweather N.F."/>
            <person name="Minton N."/>
            <person name="Stabler R."/>
            <person name="Thomson N.R."/>
            <person name="Roberts A.P."/>
            <person name="Cerdeno-Tarraga A.M."/>
            <person name="Wang H."/>
            <person name="Holden M.T.G."/>
            <person name="Wright A."/>
            <person name="Churcher C."/>
            <person name="Quail M.A."/>
            <person name="Baker S."/>
            <person name="Bason N."/>
            <person name="Brooks K."/>
            <person name="Chillingworth T."/>
            <person name="Cronin A."/>
            <person name="Davis P."/>
            <person name="Dowd L."/>
            <person name="Fraser A."/>
            <person name="Feltwell T."/>
            <person name="Hance Z."/>
            <person name="Holroyd S."/>
            <person name="Jagels K."/>
            <person name="Moule S."/>
            <person name="Mungall K."/>
            <person name="Price C."/>
            <person name="Rabbinowitsch E."/>
            <person name="Sharp S."/>
            <person name="Simmonds M."/>
            <person name="Stevens K."/>
            <person name="Unwin L."/>
            <person name="Whithead S."/>
            <person name="Dupuy B."/>
            <person name="Dougan G."/>
            <person name="Barrell B."/>
            <person name="Parkhill J."/>
        </authorList>
    </citation>
    <scope>NUCLEOTIDE SEQUENCE [LARGE SCALE GENOMIC DNA]</scope>
    <source>
        <strain>630</strain>
    </source>
</reference>
<gene>
    <name evidence="1" type="primary">lgt</name>
    <name type="ordered locus">CD630_26590</name>
</gene>
<proteinExistence type="inferred from homology"/>
<dbReference type="EC" id="2.5.1.145" evidence="1"/>
<dbReference type="EMBL" id="AM180355">
    <property type="protein sequence ID" value="CAJ69545.1"/>
    <property type="molecule type" value="Genomic_DNA"/>
</dbReference>
<dbReference type="RefSeq" id="WP_009897834.1">
    <property type="nucleotide sequence ID" value="NZ_JAUPES010000012.1"/>
</dbReference>
<dbReference type="RefSeq" id="YP_001089170.1">
    <property type="nucleotide sequence ID" value="NC_009089.1"/>
</dbReference>
<dbReference type="SMR" id="Q182Z4"/>
<dbReference type="STRING" id="272563.CD630_26590"/>
<dbReference type="EnsemblBacteria" id="CAJ69545">
    <property type="protein sequence ID" value="CAJ69545"/>
    <property type="gene ID" value="CD630_26590"/>
</dbReference>
<dbReference type="GeneID" id="66355061"/>
<dbReference type="KEGG" id="cdf:CD630_26590"/>
<dbReference type="KEGG" id="pdc:CDIF630_02913"/>
<dbReference type="PATRIC" id="fig|272563.120.peg.2802"/>
<dbReference type="eggNOG" id="COG0682">
    <property type="taxonomic scope" value="Bacteria"/>
</dbReference>
<dbReference type="OrthoDB" id="871140at2"/>
<dbReference type="PhylomeDB" id="Q182Z4"/>
<dbReference type="BioCyc" id="PDIF272563:G12WB-2810-MONOMER"/>
<dbReference type="UniPathway" id="UPA00664"/>
<dbReference type="Proteomes" id="UP000001978">
    <property type="component" value="Chromosome"/>
</dbReference>
<dbReference type="GO" id="GO:0005886">
    <property type="term" value="C:plasma membrane"/>
    <property type="evidence" value="ECO:0007669"/>
    <property type="project" value="UniProtKB-SubCell"/>
</dbReference>
<dbReference type="GO" id="GO:0008961">
    <property type="term" value="F:phosphatidylglycerol-prolipoprotein diacylglyceryl transferase activity"/>
    <property type="evidence" value="ECO:0007669"/>
    <property type="project" value="UniProtKB-UniRule"/>
</dbReference>
<dbReference type="GO" id="GO:0042158">
    <property type="term" value="P:lipoprotein biosynthetic process"/>
    <property type="evidence" value="ECO:0007669"/>
    <property type="project" value="UniProtKB-UniRule"/>
</dbReference>
<dbReference type="HAMAP" id="MF_01147">
    <property type="entry name" value="Lgt"/>
    <property type="match status" value="1"/>
</dbReference>
<dbReference type="InterPro" id="IPR001640">
    <property type="entry name" value="Lgt"/>
</dbReference>
<dbReference type="NCBIfam" id="TIGR00544">
    <property type="entry name" value="lgt"/>
    <property type="match status" value="1"/>
</dbReference>
<dbReference type="PANTHER" id="PTHR30589:SF0">
    <property type="entry name" value="PHOSPHATIDYLGLYCEROL--PROLIPOPROTEIN DIACYLGLYCERYL TRANSFERASE"/>
    <property type="match status" value="1"/>
</dbReference>
<dbReference type="PANTHER" id="PTHR30589">
    <property type="entry name" value="PROLIPOPROTEIN DIACYLGLYCERYL TRANSFERASE"/>
    <property type="match status" value="1"/>
</dbReference>
<dbReference type="Pfam" id="PF01790">
    <property type="entry name" value="LGT"/>
    <property type="match status" value="1"/>
</dbReference>
<dbReference type="PROSITE" id="PS01311">
    <property type="entry name" value="LGT"/>
    <property type="match status" value="1"/>
</dbReference>
<organism>
    <name type="scientific">Clostridioides difficile (strain 630)</name>
    <name type="common">Peptoclostridium difficile</name>
    <dbReference type="NCBI Taxonomy" id="272563"/>
    <lineage>
        <taxon>Bacteria</taxon>
        <taxon>Bacillati</taxon>
        <taxon>Bacillota</taxon>
        <taxon>Clostridia</taxon>
        <taxon>Peptostreptococcales</taxon>
        <taxon>Peptostreptococcaceae</taxon>
        <taxon>Clostridioides</taxon>
    </lineage>
</organism>
<name>LGT_CLOD6</name>
<evidence type="ECO:0000255" key="1">
    <source>
        <dbReference type="HAMAP-Rule" id="MF_01147"/>
    </source>
</evidence>
<sequence length="248" mass="27538">MDRVAFTLFGIDIMWYGILMACGMILGTLIAIKEAKRVGIKEDDVLNIAIIAIPVGLICARIYYVVFNWSYYAQNMSQIFNFRGGGLAIHGGLIGGILAGYIYTKIKNINFLKMADTVILGMPLAQAIGRWGNFINGEAHGGATNLPWGIMVDGVKVHPTFLYESIWDFGIFIVLLLFRKNKKYEGQVIVTYITLYSIGRFFIEGLRTDSLMLGPLRMAQVISLIGVIGGIIAHVYLSKKNKNNISEE</sequence>
<protein>
    <recommendedName>
        <fullName evidence="1">Phosphatidylglycerol--prolipoprotein diacylglyceryl transferase</fullName>
        <ecNumber evidence="1">2.5.1.145</ecNumber>
    </recommendedName>
</protein>
<comment type="function">
    <text evidence="1">Catalyzes the transfer of the diacylglyceryl group from phosphatidylglycerol to the sulfhydryl group of the N-terminal cysteine of a prolipoprotein, the first step in the formation of mature lipoproteins.</text>
</comment>
<comment type="catalytic activity">
    <reaction evidence="1">
        <text>L-cysteinyl-[prolipoprotein] + a 1,2-diacyl-sn-glycero-3-phospho-(1'-sn-glycerol) = an S-1,2-diacyl-sn-glyceryl-L-cysteinyl-[prolipoprotein] + sn-glycerol 1-phosphate + H(+)</text>
        <dbReference type="Rhea" id="RHEA:56712"/>
        <dbReference type="Rhea" id="RHEA-COMP:14679"/>
        <dbReference type="Rhea" id="RHEA-COMP:14680"/>
        <dbReference type="ChEBI" id="CHEBI:15378"/>
        <dbReference type="ChEBI" id="CHEBI:29950"/>
        <dbReference type="ChEBI" id="CHEBI:57685"/>
        <dbReference type="ChEBI" id="CHEBI:64716"/>
        <dbReference type="ChEBI" id="CHEBI:140658"/>
        <dbReference type="EC" id="2.5.1.145"/>
    </reaction>
</comment>
<comment type="pathway">
    <text evidence="1">Protein modification; lipoprotein biosynthesis (diacylglyceryl transfer).</text>
</comment>
<comment type="subcellular location">
    <subcellularLocation>
        <location evidence="1">Cell membrane</location>
        <topology evidence="1">Multi-pass membrane protein</topology>
    </subcellularLocation>
</comment>
<comment type="similarity">
    <text evidence="1">Belongs to the Lgt family.</text>
</comment>